<gene>
    <name type="primary">LPXC2</name>
    <name type="ordered locus">At1g24880</name>
    <name type="ORF">F5A9.14</name>
</gene>
<dbReference type="EC" id="3.5.1.108" evidence="1"/>
<dbReference type="EMBL" id="AC004133">
    <property type="protein sequence ID" value="AAG03126.1"/>
    <property type="status" value="ALT_SEQ"/>
    <property type="molecule type" value="Genomic_DNA"/>
</dbReference>
<dbReference type="EMBL" id="CP002684">
    <property type="status" value="NOT_ANNOTATED_CDS"/>
    <property type="molecule type" value="Genomic_DNA"/>
</dbReference>
<dbReference type="PIR" id="D86380">
    <property type="entry name" value="D86380"/>
</dbReference>
<dbReference type="SMR" id="P0DKB7"/>
<dbReference type="FunCoup" id="P0DKB7">
    <property type="interactions" value="7"/>
</dbReference>
<dbReference type="STRING" id="3702.P0DKB7"/>
<dbReference type="EnsemblPlants" id="AT1G24793.1">
    <property type="protein sequence ID" value="AT1G24793.1"/>
    <property type="gene ID" value="AT1G24793"/>
</dbReference>
<dbReference type="EnsemblPlants" id="AT1G25054.1">
    <property type="protein sequence ID" value="AT1G25054.1"/>
    <property type="gene ID" value="AT1G25054"/>
</dbReference>
<dbReference type="EnsemblPlants" id="AT1G25145.1">
    <property type="protein sequence ID" value="AT1G25145.1"/>
    <property type="gene ID" value="AT1G25145"/>
</dbReference>
<dbReference type="EnsemblPlants" id="AT1G25210.2">
    <property type="protein sequence ID" value="AT1G25210.2"/>
    <property type="gene ID" value="AT1G25210"/>
</dbReference>
<dbReference type="Gramene" id="AT1G24793.1">
    <property type="protein sequence ID" value="AT1G24793.1"/>
    <property type="gene ID" value="AT1G24793"/>
</dbReference>
<dbReference type="Gramene" id="AT1G25054.1">
    <property type="protein sequence ID" value="AT1G25054.1"/>
    <property type="gene ID" value="AT1G25054"/>
</dbReference>
<dbReference type="Gramene" id="AT1G25145.1">
    <property type="protein sequence ID" value="AT1G25145.1"/>
    <property type="gene ID" value="AT1G25145"/>
</dbReference>
<dbReference type="Gramene" id="AT1G25210.2">
    <property type="protein sequence ID" value="AT1G25210.2"/>
    <property type="gene ID" value="AT1G25210"/>
</dbReference>
<dbReference type="KEGG" id="ath:AT1G24793"/>
<dbReference type="KEGG" id="ath:AT1G25054"/>
<dbReference type="KEGG" id="ath:AT1G25145"/>
<dbReference type="KEGG" id="ath:AT1G25210"/>
<dbReference type="Araport" id="AT1G24880"/>
<dbReference type="TAIR" id="AT1G24880">
    <property type="gene designation" value="LPXC2"/>
</dbReference>
<dbReference type="HOGENOM" id="CLU_046528_0_0_1"/>
<dbReference type="InParanoid" id="P0DKB7"/>
<dbReference type="OMA" id="IVFYRSD"/>
<dbReference type="PhylomeDB" id="P0DKB7"/>
<dbReference type="UniPathway" id="UPA00359">
    <property type="reaction ID" value="UER00478"/>
</dbReference>
<dbReference type="PRO" id="PR:P0DKB7"/>
<dbReference type="Proteomes" id="UP000006548">
    <property type="component" value="Chromosome 1"/>
</dbReference>
<dbReference type="ExpressionAtlas" id="P0DKB7">
    <property type="expression patterns" value="baseline"/>
</dbReference>
<dbReference type="GO" id="GO:0016020">
    <property type="term" value="C:membrane"/>
    <property type="evidence" value="ECO:0007669"/>
    <property type="project" value="GOC"/>
</dbReference>
<dbReference type="GO" id="GO:0005739">
    <property type="term" value="C:mitochondrion"/>
    <property type="evidence" value="ECO:0000314"/>
    <property type="project" value="UniProtKB"/>
</dbReference>
<dbReference type="GO" id="GO:0046872">
    <property type="term" value="F:metal ion binding"/>
    <property type="evidence" value="ECO:0007669"/>
    <property type="project" value="UniProtKB-KW"/>
</dbReference>
<dbReference type="GO" id="GO:0103117">
    <property type="term" value="F:UDP-3-O-acyl-N-acetylglucosamine deacetylase activity"/>
    <property type="evidence" value="ECO:0000315"/>
    <property type="project" value="UniProtKB"/>
</dbReference>
<dbReference type="GO" id="GO:0009245">
    <property type="term" value="P:lipid A biosynthetic process"/>
    <property type="evidence" value="ECO:0007669"/>
    <property type="project" value="UniProtKB-KW"/>
</dbReference>
<dbReference type="GO" id="GO:2001289">
    <property type="term" value="P:lipid X metabolic process"/>
    <property type="evidence" value="ECO:0000315"/>
    <property type="project" value="UniProtKB"/>
</dbReference>
<dbReference type="FunFam" id="3.30.230.20:FF:000002">
    <property type="entry name" value="Probable UDP-3-O-acyl-N-acetylglucosamine deacetylase 2, mitochondrial"/>
    <property type="match status" value="1"/>
</dbReference>
<dbReference type="FunFam" id="3.30.1700.10:FF:000002">
    <property type="entry name" value="Probable UDP-3-O-acyl-N-acetylglucosamine deacetylase 3, mitochondrial"/>
    <property type="match status" value="1"/>
</dbReference>
<dbReference type="Gene3D" id="3.30.230.20">
    <property type="entry name" value="lpxc deacetylase, domain 1"/>
    <property type="match status" value="1"/>
</dbReference>
<dbReference type="Gene3D" id="3.30.1700.10">
    <property type="entry name" value="lpxc deacetylase, domain 2"/>
    <property type="match status" value="1"/>
</dbReference>
<dbReference type="HAMAP" id="MF_00388">
    <property type="entry name" value="LpxC"/>
    <property type="match status" value="1"/>
</dbReference>
<dbReference type="InterPro" id="IPR020568">
    <property type="entry name" value="Ribosomal_Su5_D2-typ_SF"/>
</dbReference>
<dbReference type="InterPro" id="IPR004463">
    <property type="entry name" value="UDP-acyl_GlcNac_deAcase"/>
</dbReference>
<dbReference type="InterPro" id="IPR011334">
    <property type="entry name" value="UDP-acyl_GlcNac_deAcase_C"/>
</dbReference>
<dbReference type="InterPro" id="IPR015870">
    <property type="entry name" value="UDP-acyl_N-AcGlcN_deAcase_N"/>
</dbReference>
<dbReference type="NCBIfam" id="TIGR00325">
    <property type="entry name" value="lpxC"/>
    <property type="match status" value="1"/>
</dbReference>
<dbReference type="PANTHER" id="PTHR33694">
    <property type="entry name" value="UDP-3-O-ACYL-N-ACETYLGLUCOSAMINE DEACETYLASE 1, MITOCHONDRIAL-RELATED"/>
    <property type="match status" value="1"/>
</dbReference>
<dbReference type="PANTHER" id="PTHR33694:SF1">
    <property type="entry name" value="UDP-3-O-ACYL-N-ACETYLGLUCOSAMINE DEACETYLASE 1, MITOCHONDRIAL-RELATED"/>
    <property type="match status" value="1"/>
</dbReference>
<dbReference type="Pfam" id="PF03331">
    <property type="entry name" value="LpxC"/>
    <property type="match status" value="1"/>
</dbReference>
<dbReference type="SUPFAM" id="SSF54211">
    <property type="entry name" value="Ribosomal protein S5 domain 2-like"/>
    <property type="match status" value="2"/>
</dbReference>
<sequence length="326" mass="35717">MRLPVTVKATKPSFLVIWIRYSSAASSPTVSLNPSGRLQQTLAGSVEVKGKSLHSGKFSTVKLNPEIAGAGRFFEFRSRFIPASIEFAQESPLCTTLLKDELKIRTVEHLLSALEAKGVDNCRIQIESESSDDREVEVPIFDGSAKEWVDAIQGVGINAAQNHDGESVEKMVAHVNKPVYVCKNDTFVAAFPALETRITCGIDFPQVPAIGCQWFSWRPIHESSFAKDIASSRTFCVYEEVERMREAGLIKGGSLDNAIVCSAEHGWMNPPLRFDDEACRHKILDLIGDLSLVSRGGNGGLPVAHIVAYKAGHALHTDLARHLTMD</sequence>
<proteinExistence type="evidence at protein level"/>
<feature type="transit peptide" description="Mitochondrion" evidence="3">
    <location>
        <begin position="1"/>
        <end position="21"/>
    </location>
</feature>
<feature type="chain" id="PRO_0000419658" description="Probable UDP-3-O-acyl-N-acetylglucosamine deacetylase 2, mitochondrial">
    <location>
        <begin position="22"/>
        <end position="326"/>
    </location>
</feature>
<feature type="binding site" evidence="1">
    <location>
        <position position="109"/>
    </location>
    <ligand>
        <name>Zn(2+)</name>
        <dbReference type="ChEBI" id="CHEBI:29105"/>
    </ligand>
</feature>
<feature type="binding site" evidence="1">
    <location>
        <position position="281"/>
    </location>
    <ligand>
        <name>Zn(2+)</name>
        <dbReference type="ChEBI" id="CHEBI:29105"/>
    </ligand>
</feature>
<feature type="binding site" evidence="1">
    <location>
        <position position="285"/>
    </location>
    <ligand>
        <name>Zn(2+)</name>
        <dbReference type="ChEBI" id="CHEBI:29105"/>
    </ligand>
</feature>
<protein>
    <recommendedName>
        <fullName evidence="1">Probable UDP-3-O-acyl-N-acetylglucosamine deacetylase 2, mitochondrial</fullName>
        <shortName evidence="1">UDP-3-O-acyl-GlcNAc deacetylase 2</shortName>
        <ecNumber evidence="1">3.5.1.108</ecNumber>
    </recommendedName>
    <alternativeName>
        <fullName>Protein LIPID X C2</fullName>
        <shortName>AtLpxC2</shortName>
    </alternativeName>
    <alternativeName>
        <fullName evidence="1">UDP-3-O-[R-3-hydroxymyristoyl]-N-acetylglucosamine deacetylase 2</fullName>
    </alternativeName>
</protein>
<comment type="function">
    <text evidence="4">Involved in the biosynthesis of lipid A, a phosphorylated glycolipid that in bacteria anchors the lipopolysaccharide to the outer membrane of the cell. Lipid A-like molecules in plants may serve as structural components of the outer membranes of mitochondria and/or chloroplasts, or may be involved in signal transduction or plant defense responses (Potential).</text>
</comment>
<comment type="catalytic activity">
    <reaction evidence="1">
        <text>a UDP-3-O-[(3R)-3-hydroxyacyl]-N-acetyl-alpha-D-glucosamine + H2O = a UDP-3-O-[(3R)-3-hydroxyacyl]-alpha-D-glucosamine + acetate</text>
        <dbReference type="Rhea" id="RHEA:67816"/>
        <dbReference type="ChEBI" id="CHEBI:15377"/>
        <dbReference type="ChEBI" id="CHEBI:30089"/>
        <dbReference type="ChEBI" id="CHEBI:137740"/>
        <dbReference type="ChEBI" id="CHEBI:173225"/>
        <dbReference type="EC" id="3.5.1.108"/>
    </reaction>
</comment>
<comment type="cofactor">
    <cofactor evidence="1">
        <name>Zn(2+)</name>
        <dbReference type="ChEBI" id="CHEBI:29105"/>
    </cofactor>
</comment>
<comment type="pathway">
    <text evidence="2">Glycolipid biosynthesis; lipid IV(A) biosynthesis; lipid IV(A) from (3R)-3-hydroxytetradecanoyl-[acyl-carrier-protein] and UDP-N-acetyl-alpha-D-glucosamine: step 2/6.</text>
</comment>
<comment type="subcellular location">
    <subcellularLocation>
        <location evidence="2 6">Mitochondrion</location>
    </subcellularLocation>
</comment>
<comment type="miscellaneous">
    <text evidence="5">Plants silencing LPXC do not have altered morphology compared to wild-type plants when grown under normal growth conditions, but they do not accumulate 2,3-diacylglucosamine-1-phosphate.</text>
</comment>
<comment type="similarity">
    <text evidence="4">Belongs to the LpxC family.</text>
</comment>
<comment type="sequence caution" evidence="4">
    <conflict type="erroneous gene model prediction">
        <sequence resource="EMBL-CDS" id="AAG03126"/>
    </conflict>
    <text>The predicted gene has been split into 2 genes: At1g24880 and At1g24881.</text>
</comment>
<name>LPXC2_ARATH</name>
<accession>P0DKB7</accession>
<accession>B3H6R1</accession>
<accession>E2RTM8</accession>
<accession>P0C2G7</accession>
<accession>Q56X64</accession>
<accession>Q56XG5</accession>
<accession>Q7GAV1</accession>
<accession>Q8GXP0</accession>
<accession>Q8LPR6</accession>
<accession>Q9FE36</accession>
<accession>Q9FXK3</accession>
<accession>Q9FXK7</accession>
<evidence type="ECO:0000250" key="1">
    <source>
        <dbReference type="UniProtKB" id="P0A725"/>
    </source>
</evidence>
<evidence type="ECO:0000269" key="2">
    <source>
    </source>
</evidence>
<evidence type="ECO:0000269" key="3">
    <source>
    </source>
</evidence>
<evidence type="ECO:0000305" key="4"/>
<evidence type="ECO:0000305" key="5">
    <source>
    </source>
</evidence>
<evidence type="ECO:0000305" key="6">
    <source>
    </source>
</evidence>
<keyword id="KW-0378">Hydrolase</keyword>
<keyword id="KW-0441">Lipid A biosynthesis</keyword>
<keyword id="KW-0444">Lipid biosynthesis</keyword>
<keyword id="KW-0443">Lipid metabolism</keyword>
<keyword id="KW-0479">Metal-binding</keyword>
<keyword id="KW-0496">Mitochondrion</keyword>
<keyword id="KW-1185">Reference proteome</keyword>
<keyword id="KW-0809">Transit peptide</keyword>
<keyword id="KW-0862">Zinc</keyword>
<reference key="1">
    <citation type="journal article" date="2000" name="Nature">
        <title>Sequence and analysis of chromosome 1 of the plant Arabidopsis thaliana.</title>
        <authorList>
            <person name="Theologis A."/>
            <person name="Ecker J.R."/>
            <person name="Palm C.J."/>
            <person name="Federspiel N.A."/>
            <person name="Kaul S."/>
            <person name="White O."/>
            <person name="Alonso J."/>
            <person name="Altafi H."/>
            <person name="Araujo R."/>
            <person name="Bowman C.L."/>
            <person name="Brooks S.Y."/>
            <person name="Buehler E."/>
            <person name="Chan A."/>
            <person name="Chao Q."/>
            <person name="Chen H."/>
            <person name="Cheuk R.F."/>
            <person name="Chin C.W."/>
            <person name="Chung M.K."/>
            <person name="Conn L."/>
            <person name="Conway A.B."/>
            <person name="Conway A.R."/>
            <person name="Creasy T.H."/>
            <person name="Dewar K."/>
            <person name="Dunn P."/>
            <person name="Etgu P."/>
            <person name="Feldblyum T.V."/>
            <person name="Feng J.-D."/>
            <person name="Fong B."/>
            <person name="Fujii C.Y."/>
            <person name="Gill J.E."/>
            <person name="Goldsmith A.D."/>
            <person name="Haas B."/>
            <person name="Hansen N.F."/>
            <person name="Hughes B."/>
            <person name="Huizar L."/>
            <person name="Hunter J.L."/>
            <person name="Jenkins J."/>
            <person name="Johnson-Hopson C."/>
            <person name="Khan S."/>
            <person name="Khaykin E."/>
            <person name="Kim C.J."/>
            <person name="Koo H.L."/>
            <person name="Kremenetskaia I."/>
            <person name="Kurtz D.B."/>
            <person name="Kwan A."/>
            <person name="Lam B."/>
            <person name="Langin-Hooper S."/>
            <person name="Lee A."/>
            <person name="Lee J.M."/>
            <person name="Lenz C.A."/>
            <person name="Li J.H."/>
            <person name="Li Y.-P."/>
            <person name="Lin X."/>
            <person name="Liu S.X."/>
            <person name="Liu Z.A."/>
            <person name="Luros J.S."/>
            <person name="Maiti R."/>
            <person name="Marziali A."/>
            <person name="Militscher J."/>
            <person name="Miranda M."/>
            <person name="Nguyen M."/>
            <person name="Nierman W.C."/>
            <person name="Osborne B.I."/>
            <person name="Pai G."/>
            <person name="Peterson J."/>
            <person name="Pham P.K."/>
            <person name="Rizzo M."/>
            <person name="Rooney T."/>
            <person name="Rowley D."/>
            <person name="Sakano H."/>
            <person name="Salzberg S.L."/>
            <person name="Schwartz J.R."/>
            <person name="Shinn P."/>
            <person name="Southwick A.M."/>
            <person name="Sun H."/>
            <person name="Tallon L.J."/>
            <person name="Tambunga G."/>
            <person name="Toriumi M.J."/>
            <person name="Town C.D."/>
            <person name="Utterback T."/>
            <person name="Van Aken S."/>
            <person name="Vaysberg M."/>
            <person name="Vysotskaia V.S."/>
            <person name="Walker M."/>
            <person name="Wu D."/>
            <person name="Yu G."/>
            <person name="Fraser C.M."/>
            <person name="Venter J.C."/>
            <person name="Davis R.W."/>
        </authorList>
    </citation>
    <scope>NUCLEOTIDE SEQUENCE [LARGE SCALE GENOMIC DNA]</scope>
    <source>
        <strain>cv. Columbia</strain>
    </source>
</reference>
<reference key="2">
    <citation type="journal article" date="2017" name="Plant J.">
        <title>Araport11: a complete reannotation of the Arabidopsis thaliana reference genome.</title>
        <authorList>
            <person name="Cheng C.Y."/>
            <person name="Krishnakumar V."/>
            <person name="Chan A.P."/>
            <person name="Thibaud-Nissen F."/>
            <person name="Schobel S."/>
            <person name="Town C.D."/>
        </authorList>
    </citation>
    <scope>GENOME REANNOTATION</scope>
    <source>
        <strain>cv. Columbia</strain>
    </source>
</reference>
<reference key="3">
    <citation type="journal article" date="2011" name="Proc. Natl. Acad. Sci. U.S.A.">
        <title>Pathway for lipid A biosynthesis in Arabidopsis thaliana resembling that of Escherichia coli.</title>
        <authorList>
            <person name="Li C."/>
            <person name="Guan Z."/>
            <person name="Liu D."/>
            <person name="Raetz C.R."/>
        </authorList>
    </citation>
    <scope>PATHWAY</scope>
    <scope>SUBCELLULAR LOCATION</scope>
    <scope>GENE FAMILY</scope>
    <scope>NOMENCLATURE</scope>
</reference>
<reference key="4">
    <citation type="journal article" date="2015" name="J. Exp. Bot.">
        <title>Identification of cleavage sites and substrate proteins for two mitochondrial intermediate peptidases in Arabidopsis thaliana.</title>
        <authorList>
            <person name="Carrie C."/>
            <person name="Venne A.S."/>
            <person name="Zahedi R.P."/>
            <person name="Soll J."/>
        </authorList>
    </citation>
    <scope>IDENTIFICATION BY MASS SPECTROMETRY</scope>
    <scope>CLEAVAGE OF TRANSIT PEPTIDE AFTER TYR-21</scope>
</reference>
<organism>
    <name type="scientific">Arabidopsis thaliana</name>
    <name type="common">Mouse-ear cress</name>
    <dbReference type="NCBI Taxonomy" id="3702"/>
    <lineage>
        <taxon>Eukaryota</taxon>
        <taxon>Viridiplantae</taxon>
        <taxon>Streptophyta</taxon>
        <taxon>Embryophyta</taxon>
        <taxon>Tracheophyta</taxon>
        <taxon>Spermatophyta</taxon>
        <taxon>Magnoliopsida</taxon>
        <taxon>eudicotyledons</taxon>
        <taxon>Gunneridae</taxon>
        <taxon>Pentapetalae</taxon>
        <taxon>rosids</taxon>
        <taxon>malvids</taxon>
        <taxon>Brassicales</taxon>
        <taxon>Brassicaceae</taxon>
        <taxon>Camelineae</taxon>
        <taxon>Arabidopsis</taxon>
    </lineage>
</organism>